<accession>O66519</accession>
<evidence type="ECO:0000250" key="1"/>
<evidence type="ECO:0000305" key="2"/>
<reference key="1">
    <citation type="journal article" date="1998" name="Nature">
        <title>The complete genome of the hyperthermophilic bacterium Aquifex aeolicus.</title>
        <authorList>
            <person name="Deckert G."/>
            <person name="Warren P.V."/>
            <person name="Gaasterland T."/>
            <person name="Young W.G."/>
            <person name="Lenox A.L."/>
            <person name="Graham D.E."/>
            <person name="Overbeek R."/>
            <person name="Snead M.A."/>
            <person name="Keller M."/>
            <person name="Aujay M."/>
            <person name="Huber R."/>
            <person name="Feldman R.A."/>
            <person name="Short J.M."/>
            <person name="Olsen G.J."/>
            <person name="Swanson R.V."/>
        </authorList>
    </citation>
    <scope>NUCLEOTIDE SEQUENCE [LARGE SCALE GENOMIC DNA]</scope>
    <source>
        <strain>VF5</strain>
    </source>
</reference>
<sequence>MLRKKTLRDVDVKGKRVLVRVDYNVPLDEQGNIVDDTRIRASLPTVEYLLDANAKVILMSHLGRPKNRDPKYSLAPVAKRLSRYINKEVKLAPDCVGEEVKRIVNSMKEGDVVLLENLRFHKEETECDENFARELASLGEVYVADAFGTCHRKHASVYLVPKFLKPAVMGFLLEKEITYFEKAMVAPQRPVVAILGGAKVSSKLEVIKNLIRRVDKLFIGGAMAFTFLKAMGYKVGNSLVEDDLQDVARDLIDVAKKLEIKLYLPVDFVIGQEVSENTPTKVVPWQEIPDGWMGLDIGPVSVELVKEIISDAQTIVWNGPMGVFEIDKFKHGTIEVAKLLAQSSALTIAGGGDTDHAIHKAGVYHAFDFVSTGGGAFLELLAGKELPCLVNLDDKEA</sequence>
<dbReference type="EC" id="2.7.2.3"/>
<dbReference type="EMBL" id="AE000657">
    <property type="protein sequence ID" value="AAC06475.1"/>
    <property type="molecule type" value="Genomic_DNA"/>
</dbReference>
<dbReference type="PIR" id="D70311">
    <property type="entry name" value="D70311"/>
</dbReference>
<dbReference type="RefSeq" id="NP_213079.1">
    <property type="nucleotide sequence ID" value="NC_000918.1"/>
</dbReference>
<dbReference type="RefSeq" id="WP_010880017.1">
    <property type="nucleotide sequence ID" value="NC_000918.1"/>
</dbReference>
<dbReference type="SMR" id="O66519"/>
<dbReference type="FunCoup" id="O66519">
    <property type="interactions" value="413"/>
</dbReference>
<dbReference type="STRING" id="224324.aq_118"/>
<dbReference type="EnsemblBacteria" id="AAC06475">
    <property type="protein sequence ID" value="AAC06475"/>
    <property type="gene ID" value="aq_118"/>
</dbReference>
<dbReference type="KEGG" id="aae:aq_118"/>
<dbReference type="PATRIC" id="fig|224324.8.peg.102"/>
<dbReference type="eggNOG" id="COG0126">
    <property type="taxonomic scope" value="Bacteria"/>
</dbReference>
<dbReference type="HOGENOM" id="CLU_025427_0_2_0"/>
<dbReference type="InParanoid" id="O66519"/>
<dbReference type="OrthoDB" id="9808460at2"/>
<dbReference type="UniPathway" id="UPA00109">
    <property type="reaction ID" value="UER00185"/>
</dbReference>
<dbReference type="Proteomes" id="UP000000798">
    <property type="component" value="Chromosome"/>
</dbReference>
<dbReference type="GO" id="GO:0005829">
    <property type="term" value="C:cytosol"/>
    <property type="evidence" value="ECO:0000318"/>
    <property type="project" value="GO_Central"/>
</dbReference>
<dbReference type="GO" id="GO:0043531">
    <property type="term" value="F:ADP binding"/>
    <property type="evidence" value="ECO:0000318"/>
    <property type="project" value="GO_Central"/>
</dbReference>
<dbReference type="GO" id="GO:0005524">
    <property type="term" value="F:ATP binding"/>
    <property type="evidence" value="ECO:0000318"/>
    <property type="project" value="GO_Central"/>
</dbReference>
<dbReference type="GO" id="GO:0004618">
    <property type="term" value="F:phosphoglycerate kinase activity"/>
    <property type="evidence" value="ECO:0000318"/>
    <property type="project" value="GO_Central"/>
</dbReference>
<dbReference type="GO" id="GO:0006094">
    <property type="term" value="P:gluconeogenesis"/>
    <property type="evidence" value="ECO:0000318"/>
    <property type="project" value="GO_Central"/>
</dbReference>
<dbReference type="GO" id="GO:0006096">
    <property type="term" value="P:glycolytic process"/>
    <property type="evidence" value="ECO:0000318"/>
    <property type="project" value="GO_Central"/>
</dbReference>
<dbReference type="CDD" id="cd00318">
    <property type="entry name" value="Phosphoglycerate_kinase"/>
    <property type="match status" value="1"/>
</dbReference>
<dbReference type="FunFam" id="3.40.50.1260:FF:000003">
    <property type="entry name" value="Phosphoglycerate kinase"/>
    <property type="match status" value="1"/>
</dbReference>
<dbReference type="FunFam" id="3.40.50.1260:FF:000006">
    <property type="entry name" value="Phosphoglycerate kinase"/>
    <property type="match status" value="1"/>
</dbReference>
<dbReference type="Gene3D" id="3.40.50.1260">
    <property type="entry name" value="Phosphoglycerate kinase, N-terminal domain"/>
    <property type="match status" value="2"/>
</dbReference>
<dbReference type="HAMAP" id="MF_00145">
    <property type="entry name" value="Phosphoglyc_kinase"/>
    <property type="match status" value="1"/>
</dbReference>
<dbReference type="InterPro" id="IPR001576">
    <property type="entry name" value="Phosphoglycerate_kinase"/>
</dbReference>
<dbReference type="InterPro" id="IPR015911">
    <property type="entry name" value="Phosphoglycerate_kinase_CS"/>
</dbReference>
<dbReference type="InterPro" id="IPR015824">
    <property type="entry name" value="Phosphoglycerate_kinase_N"/>
</dbReference>
<dbReference type="InterPro" id="IPR036043">
    <property type="entry name" value="Phosphoglycerate_kinase_sf"/>
</dbReference>
<dbReference type="PANTHER" id="PTHR11406">
    <property type="entry name" value="PHOSPHOGLYCERATE KINASE"/>
    <property type="match status" value="1"/>
</dbReference>
<dbReference type="PANTHER" id="PTHR11406:SF23">
    <property type="entry name" value="PHOSPHOGLYCERATE KINASE 1, CHLOROPLASTIC-RELATED"/>
    <property type="match status" value="1"/>
</dbReference>
<dbReference type="Pfam" id="PF00162">
    <property type="entry name" value="PGK"/>
    <property type="match status" value="1"/>
</dbReference>
<dbReference type="PIRSF" id="PIRSF000724">
    <property type="entry name" value="Pgk"/>
    <property type="match status" value="1"/>
</dbReference>
<dbReference type="PRINTS" id="PR00477">
    <property type="entry name" value="PHGLYCKINASE"/>
</dbReference>
<dbReference type="SUPFAM" id="SSF53748">
    <property type="entry name" value="Phosphoglycerate kinase"/>
    <property type="match status" value="1"/>
</dbReference>
<dbReference type="PROSITE" id="PS00111">
    <property type="entry name" value="PGLYCERATE_KINASE"/>
    <property type="match status" value="1"/>
</dbReference>
<name>PGK_AQUAE</name>
<feature type="chain" id="PRO_0000145898" description="Phosphoglycerate kinase">
    <location>
        <begin position="1"/>
        <end position="397"/>
    </location>
</feature>
<feature type="binding site" evidence="1">
    <location>
        <begin position="22"/>
        <end position="24"/>
    </location>
    <ligand>
        <name>substrate</name>
    </ligand>
</feature>
<feature type="binding site" evidence="1">
    <location>
        <position position="38"/>
    </location>
    <ligand>
        <name>substrate</name>
    </ligand>
</feature>
<feature type="binding site" evidence="1">
    <location>
        <begin position="61"/>
        <end position="64"/>
    </location>
    <ligand>
        <name>substrate</name>
    </ligand>
</feature>
<feature type="binding site" evidence="1">
    <location>
        <position position="119"/>
    </location>
    <ligand>
        <name>substrate</name>
    </ligand>
</feature>
<feature type="binding site" evidence="1">
    <location>
        <position position="152"/>
    </location>
    <ligand>
        <name>substrate</name>
    </ligand>
</feature>
<feature type="binding site" evidence="1">
    <location>
        <position position="203"/>
    </location>
    <ligand>
        <name>ATP</name>
        <dbReference type="ChEBI" id="CHEBI:30616"/>
    </ligand>
</feature>
<feature type="binding site" evidence="1">
    <location>
        <position position="294"/>
    </location>
    <ligand>
        <name>ATP</name>
        <dbReference type="ChEBI" id="CHEBI:30616"/>
    </ligand>
</feature>
<feature type="binding site" evidence="1">
    <location>
        <position position="325"/>
    </location>
    <ligand>
        <name>ATP</name>
        <dbReference type="ChEBI" id="CHEBI:30616"/>
    </ligand>
</feature>
<feature type="binding site" evidence="1">
    <location>
        <begin position="351"/>
        <end position="354"/>
    </location>
    <ligand>
        <name>ATP</name>
        <dbReference type="ChEBI" id="CHEBI:30616"/>
    </ligand>
</feature>
<comment type="catalytic activity">
    <reaction>
        <text>(2R)-3-phosphoglycerate + ATP = (2R)-3-phospho-glyceroyl phosphate + ADP</text>
        <dbReference type="Rhea" id="RHEA:14801"/>
        <dbReference type="ChEBI" id="CHEBI:30616"/>
        <dbReference type="ChEBI" id="CHEBI:57604"/>
        <dbReference type="ChEBI" id="CHEBI:58272"/>
        <dbReference type="ChEBI" id="CHEBI:456216"/>
        <dbReference type="EC" id="2.7.2.3"/>
    </reaction>
</comment>
<comment type="pathway">
    <text>Carbohydrate degradation; glycolysis; pyruvate from D-glyceraldehyde 3-phosphate: step 2/5.</text>
</comment>
<comment type="subunit">
    <text evidence="1">Monomer.</text>
</comment>
<comment type="subcellular location">
    <subcellularLocation>
        <location evidence="2">Cytoplasm</location>
    </subcellularLocation>
</comment>
<comment type="similarity">
    <text evidence="2">Belongs to the phosphoglycerate kinase family.</text>
</comment>
<organism>
    <name type="scientific">Aquifex aeolicus (strain VF5)</name>
    <dbReference type="NCBI Taxonomy" id="224324"/>
    <lineage>
        <taxon>Bacteria</taxon>
        <taxon>Pseudomonadati</taxon>
        <taxon>Aquificota</taxon>
        <taxon>Aquificia</taxon>
        <taxon>Aquificales</taxon>
        <taxon>Aquificaceae</taxon>
        <taxon>Aquifex</taxon>
    </lineage>
</organism>
<gene>
    <name type="primary">pgk</name>
    <name type="ordered locus">aq_118</name>
</gene>
<protein>
    <recommendedName>
        <fullName>Phosphoglycerate kinase</fullName>
        <ecNumber>2.7.2.3</ecNumber>
    </recommendedName>
</protein>
<keyword id="KW-0067">ATP-binding</keyword>
<keyword id="KW-0963">Cytoplasm</keyword>
<keyword id="KW-0324">Glycolysis</keyword>
<keyword id="KW-0418">Kinase</keyword>
<keyword id="KW-0547">Nucleotide-binding</keyword>
<keyword id="KW-1185">Reference proteome</keyword>
<keyword id="KW-0808">Transferase</keyword>
<proteinExistence type="inferred from homology"/>